<proteinExistence type="evidence at protein level"/>
<gene>
    <name evidence="7" type="primary">SMO2-1</name>
    <name evidence="5 7" type="synonym">SMO2</name>
    <name evidence="9" type="ordered locus">At2g29390</name>
    <name evidence="10" type="ORF">F16P2.23</name>
</gene>
<accession>Q9ZW22</accession>
<accession>A8MQF7</accession>
<accession>A8MRF1</accession>
<accession>F4IKN2</accession>
<accession>Q8W5A2</accession>
<accession>Q8W5B3</accession>
<reference key="1">
    <citation type="journal article" date="2001" name="FEBS Lett.">
        <title>Functional identification of sterol-4alpha-methyl oxidase cDNAs from Arabidopsis thaliana by complementation of a yeast erg25 mutant lacking sterol-4alpha-methyl oxidation.</title>
        <authorList>
            <person name="Darnet S."/>
            <person name="Bard M."/>
            <person name="Rahier A."/>
        </authorList>
    </citation>
    <scope>NUCLEOTIDE SEQUENCE [MRNA] (ISOFORM 2)</scope>
    <scope>FUNCTION</scope>
    <scope>CATALYTIC ACTIVITY</scope>
</reference>
<reference key="2">
    <citation type="journal article" date="2004" name="Biochem. J.">
        <title>Plant sterol biosynthesis: identification of two distinct families of sterol 4alpha-methyl oxidases.</title>
        <authorList>
            <person name="Darnet S."/>
            <person name="Rahier A."/>
        </authorList>
    </citation>
    <scope>NUCLEOTIDE SEQUENCE [MRNA] (ISOFORM 2)</scope>
    <scope>GENE FAMILY</scope>
    <scope>NOMENCLATURE</scope>
</reference>
<reference key="3">
    <citation type="journal article" date="1999" name="Nature">
        <title>Sequence and analysis of chromosome 2 of the plant Arabidopsis thaliana.</title>
        <authorList>
            <person name="Lin X."/>
            <person name="Kaul S."/>
            <person name="Rounsley S.D."/>
            <person name="Shea T.P."/>
            <person name="Benito M.-I."/>
            <person name="Town C.D."/>
            <person name="Fujii C.Y."/>
            <person name="Mason T.M."/>
            <person name="Bowman C.L."/>
            <person name="Barnstead M.E."/>
            <person name="Feldblyum T.V."/>
            <person name="Buell C.R."/>
            <person name="Ketchum K.A."/>
            <person name="Lee J.J."/>
            <person name="Ronning C.M."/>
            <person name="Koo H.L."/>
            <person name="Moffat K.S."/>
            <person name="Cronin L.A."/>
            <person name="Shen M."/>
            <person name="Pai G."/>
            <person name="Van Aken S."/>
            <person name="Umayam L."/>
            <person name="Tallon L.J."/>
            <person name="Gill J.E."/>
            <person name="Adams M.D."/>
            <person name="Carrera A.J."/>
            <person name="Creasy T.H."/>
            <person name="Goodman H.M."/>
            <person name="Somerville C.R."/>
            <person name="Copenhaver G.P."/>
            <person name="Preuss D."/>
            <person name="Nierman W.C."/>
            <person name="White O."/>
            <person name="Eisen J.A."/>
            <person name="Salzberg S.L."/>
            <person name="Fraser C.M."/>
            <person name="Venter J.C."/>
        </authorList>
    </citation>
    <scope>NUCLEOTIDE SEQUENCE [LARGE SCALE GENOMIC DNA]</scope>
    <source>
        <strain>cv. Columbia</strain>
    </source>
</reference>
<reference key="4">
    <citation type="journal article" date="2017" name="Plant J.">
        <title>Araport11: a complete reannotation of the Arabidopsis thaliana reference genome.</title>
        <authorList>
            <person name="Cheng C.Y."/>
            <person name="Krishnakumar V."/>
            <person name="Chan A.P."/>
            <person name="Thibaud-Nissen F."/>
            <person name="Schobel S."/>
            <person name="Town C.D."/>
        </authorList>
    </citation>
    <scope>GENOME REANNOTATION</scope>
    <source>
        <strain>cv. Columbia</strain>
    </source>
</reference>
<reference key="5">
    <citation type="submission" date="2002-03" db="EMBL/GenBank/DDBJ databases">
        <title>Full-length cDNA from Arabidopsis thaliana.</title>
        <authorList>
            <person name="Brover V.V."/>
            <person name="Troukhan M.E."/>
            <person name="Alexandrov N.A."/>
            <person name="Lu Y.-P."/>
            <person name="Flavell R.B."/>
            <person name="Feldmann K.A."/>
        </authorList>
    </citation>
    <scope>NUCLEOTIDE SEQUENCE [LARGE SCALE MRNA] (ISOFORM 1)</scope>
</reference>
<reference key="6">
    <citation type="journal article" date="2003" name="Science">
        <title>Empirical analysis of transcriptional activity in the Arabidopsis genome.</title>
        <authorList>
            <person name="Yamada K."/>
            <person name="Lim J."/>
            <person name="Dale J.M."/>
            <person name="Chen H."/>
            <person name="Shinn P."/>
            <person name="Palm C.J."/>
            <person name="Southwick A.M."/>
            <person name="Wu H.C."/>
            <person name="Kim C.J."/>
            <person name="Nguyen M."/>
            <person name="Pham P.K."/>
            <person name="Cheuk R.F."/>
            <person name="Karlin-Newmann G."/>
            <person name="Liu S.X."/>
            <person name="Lam B."/>
            <person name="Sakano H."/>
            <person name="Wu T."/>
            <person name="Yu G."/>
            <person name="Miranda M."/>
            <person name="Quach H.L."/>
            <person name="Tripp M."/>
            <person name="Chang C.H."/>
            <person name="Lee J.M."/>
            <person name="Toriumi M.J."/>
            <person name="Chan M.M."/>
            <person name="Tang C.C."/>
            <person name="Onodera C.S."/>
            <person name="Deng J.M."/>
            <person name="Akiyama K."/>
            <person name="Ansari Y."/>
            <person name="Arakawa T."/>
            <person name="Banh J."/>
            <person name="Banno F."/>
            <person name="Bowser L."/>
            <person name="Brooks S.Y."/>
            <person name="Carninci P."/>
            <person name="Chao Q."/>
            <person name="Choy N."/>
            <person name="Enju A."/>
            <person name="Goldsmith A.D."/>
            <person name="Gurjal M."/>
            <person name="Hansen N.F."/>
            <person name="Hayashizaki Y."/>
            <person name="Johnson-Hopson C."/>
            <person name="Hsuan V.W."/>
            <person name="Iida K."/>
            <person name="Karnes M."/>
            <person name="Khan S."/>
            <person name="Koesema E."/>
            <person name="Ishida J."/>
            <person name="Jiang P.X."/>
            <person name="Jones T."/>
            <person name="Kawai J."/>
            <person name="Kamiya A."/>
            <person name="Meyers C."/>
            <person name="Nakajima M."/>
            <person name="Narusaka M."/>
            <person name="Seki M."/>
            <person name="Sakurai T."/>
            <person name="Satou M."/>
            <person name="Tamse R."/>
            <person name="Vaysberg M."/>
            <person name="Wallender E.K."/>
            <person name="Wong C."/>
            <person name="Yamamura Y."/>
            <person name="Yuan S."/>
            <person name="Shinozaki K."/>
            <person name="Davis R.W."/>
            <person name="Theologis A."/>
            <person name="Ecker J.R."/>
        </authorList>
    </citation>
    <scope>NUCLEOTIDE SEQUENCE [LARGE SCALE MRNA] (ISOFORM 2)</scope>
    <source>
        <strain>cv. Columbia</strain>
    </source>
</reference>
<reference key="7">
    <citation type="journal article" date="2016" name="Plant Physiol.">
        <title>Sterol methyl oxidases affect embryo development via auxin-associated mechanisms.</title>
        <authorList>
            <person name="Zhang X."/>
            <person name="Sun S."/>
            <person name="Nie X."/>
            <person name="Boutte Y."/>
            <person name="Grison M."/>
            <person name="Li P."/>
            <person name="Kuang S."/>
            <person name="Men S."/>
        </authorList>
    </citation>
    <scope>FUNCTION</scope>
    <scope>DISRUPTION PHENOTYPE</scope>
    <scope>SUBCELLULAR LOCATION</scope>
    <scope>TISSUE SPECIFICITY</scope>
    <scope>DEVELOPMENTAL STAGE</scope>
    <source>
        <strain>cv. Columbia</strain>
    </source>
</reference>
<comment type="function">
    <text evidence="3 4">Non-heme iron oxygenase involved in sterols biosynthesis by catalyzing the removal of the second methyl group at the C-4 position (PubMed:11707264). 24-ethylidenelophenol and 24-ethyllophenol are the preferred substrates (PubMed:11707264). Together with SMO2-2, required during embryogenesis, probably by maintaining sterols and auxin homeostasis (PubMed:27006488).</text>
</comment>
<comment type="catalytic activity">
    <reaction evidence="3">
        <text>4,4-dimethyl-5alpha-cholest-7-en-3beta-ol + 6 Fe(II)-[cytochrome b5] + 3 O2 + 5 H(+) = 4alpha-carboxy-4beta-methyl-5alpha-cholest-7-ene-3beta-ol + 6 Fe(III)-[cytochrome b5] + 4 H2O</text>
        <dbReference type="Rhea" id="RHEA:55220"/>
        <dbReference type="Rhea" id="RHEA-COMP:10438"/>
        <dbReference type="Rhea" id="RHEA-COMP:10439"/>
        <dbReference type="ChEBI" id="CHEBI:15377"/>
        <dbReference type="ChEBI" id="CHEBI:15378"/>
        <dbReference type="ChEBI" id="CHEBI:15379"/>
        <dbReference type="ChEBI" id="CHEBI:16455"/>
        <dbReference type="ChEBI" id="CHEBI:29033"/>
        <dbReference type="ChEBI" id="CHEBI:29034"/>
        <dbReference type="ChEBI" id="CHEBI:58387"/>
        <dbReference type="EC" id="1.14.18.9"/>
    </reaction>
</comment>
<comment type="catalytic activity">
    <reaction evidence="3">
        <text>24-methylidenelophenol + 6 Fe(II)-[cytochrome b5] + 3 O2 + 5 H(+) = 4alpha-carboxy-ergosta-7,24(24(1))-dien-3beta-ol + 6 Fe(III)-[cytochrome b5] + 4 H2O</text>
        <dbReference type="Rhea" id="RHEA:58868"/>
        <dbReference type="Rhea" id="RHEA-COMP:10438"/>
        <dbReference type="Rhea" id="RHEA-COMP:10439"/>
        <dbReference type="ChEBI" id="CHEBI:15377"/>
        <dbReference type="ChEBI" id="CHEBI:15378"/>
        <dbReference type="ChEBI" id="CHEBI:15379"/>
        <dbReference type="ChEBI" id="CHEBI:29033"/>
        <dbReference type="ChEBI" id="CHEBI:29034"/>
        <dbReference type="ChEBI" id="CHEBI:29107"/>
        <dbReference type="ChEBI" id="CHEBI:142850"/>
        <dbReference type="EC" id="1.14.18.11"/>
    </reaction>
</comment>
<comment type="cofactor">
    <cofactor evidence="1">
        <name>Fe cation</name>
        <dbReference type="ChEBI" id="CHEBI:24875"/>
    </cofactor>
</comment>
<comment type="subcellular location">
    <subcellularLocation>
        <location evidence="4">Endoplasmic reticulum membrane</location>
        <topology evidence="2">Multi-pass membrane protein</topology>
    </subcellularLocation>
</comment>
<comment type="alternative products">
    <event type="alternative splicing"/>
    <isoform>
        <id>Q9ZW22-1</id>
        <name>1</name>
        <sequence type="displayed"/>
    </isoform>
    <isoform>
        <id>Q9ZW22-2</id>
        <name>2</name>
        <sequence type="described" ref="VSP_041864"/>
    </isoform>
    <isoform>
        <id>Q9ZW22-3</id>
        <name>3</name>
        <sequence type="described" ref="VSP_041862 VSP_041864"/>
    </isoform>
    <isoform>
        <id>Q9ZW22-4</id>
        <name>4</name>
        <sequence type="described" ref="VSP_041860 VSP_041864"/>
    </isoform>
    <isoform>
        <id>Q9ZW22-5</id>
        <name>5</name>
        <sequence type="described" ref="VSP_041861 VSP_041863 VSP_041864"/>
    </isoform>
</comment>
<comment type="tissue specificity">
    <text evidence="4">Strongly expressed in leaves, flowers, siliques and developing seeds.</text>
</comment>
<comment type="developmental stage">
    <text evidence="4">In leaves, mostly expressed in vascular tissues and trichomes (PubMed:27006488). In flowers, accumulates mainly in sepals, stamen filaments, pollen grains and pistils, but barely detectable in petals (PubMed:27006488). Present in siliques at all stages of development (PubMed:27006488). During embroygenesis, expressed in both embryos and endosperms throughout embryonic development (PubMed:27006488).</text>
</comment>
<comment type="domain">
    <text evidence="1">The histidine box domains may contain the active site and/or be involved in metal ion binding.</text>
</comment>
<comment type="disruption phenotype">
    <text evidence="4">No obvious phenotype (PubMed:27006488). The smo2-1 smo2-2 double mutant accumulates the 4alpha-methylsterols 24-ethylidene lophenol and 24-ethyl lophenol, and is embryonic lethal, arrested in early stages with an altered endosperm development, probably due to disturbed auxin flux and responses (PubMed:27006488).</text>
</comment>
<comment type="miscellaneous">
    <text evidence="8">Requires a membrane-bound cytochrome b5 as an obligatory electron carrier from NAD(P)H to SMO.</text>
</comment>
<comment type="similarity">
    <text evidence="8">Belongs to the sterol desaturase family.</text>
</comment>
<name>SMO21_ARATH</name>
<dbReference type="EC" id="1.14.18.11" evidence="3"/>
<dbReference type="EC" id="1.14.18.9" evidence="3"/>
<dbReference type="EMBL" id="AF327853">
    <property type="protein sequence ID" value="AAL32302.1"/>
    <property type="molecule type" value="mRNA"/>
</dbReference>
<dbReference type="EMBL" id="AF222719">
    <property type="protein sequence ID" value="AAL32287.1"/>
    <property type="molecule type" value="mRNA"/>
</dbReference>
<dbReference type="EMBL" id="AC004561">
    <property type="protein sequence ID" value="AAC95199.2"/>
    <property type="molecule type" value="Genomic_DNA"/>
</dbReference>
<dbReference type="EMBL" id="CP002685">
    <property type="protein sequence ID" value="AEC08245.1"/>
    <property type="molecule type" value="Genomic_DNA"/>
</dbReference>
<dbReference type="EMBL" id="CP002685">
    <property type="protein sequence ID" value="AEC08246.1"/>
    <property type="molecule type" value="Genomic_DNA"/>
</dbReference>
<dbReference type="EMBL" id="CP002685">
    <property type="protein sequence ID" value="AEC08247.1"/>
    <property type="molecule type" value="Genomic_DNA"/>
</dbReference>
<dbReference type="EMBL" id="CP002685">
    <property type="protein sequence ID" value="AEC08248.1"/>
    <property type="molecule type" value="Genomic_DNA"/>
</dbReference>
<dbReference type="EMBL" id="CP002685">
    <property type="protein sequence ID" value="AEC08249.1"/>
    <property type="molecule type" value="Genomic_DNA"/>
</dbReference>
<dbReference type="EMBL" id="CP002685">
    <property type="protein sequence ID" value="ANM61554.1"/>
    <property type="molecule type" value="Genomic_DNA"/>
</dbReference>
<dbReference type="EMBL" id="AY086287">
    <property type="protein sequence ID" value="AAM64359.1"/>
    <property type="molecule type" value="mRNA"/>
</dbReference>
<dbReference type="EMBL" id="BT002780">
    <property type="protein sequence ID" value="AAO22608.1"/>
    <property type="molecule type" value="mRNA"/>
</dbReference>
<dbReference type="EMBL" id="BT005125">
    <property type="protein sequence ID" value="AAO50658.1"/>
    <property type="molecule type" value="mRNA"/>
</dbReference>
<dbReference type="PIR" id="G84695">
    <property type="entry name" value="G84695"/>
</dbReference>
<dbReference type="RefSeq" id="NP_001077974.1">
    <molecule id="Q9ZW22-4"/>
    <property type="nucleotide sequence ID" value="NM_001084505.1"/>
</dbReference>
<dbReference type="RefSeq" id="NP_001077975.1">
    <molecule id="Q9ZW22-5"/>
    <property type="nucleotide sequence ID" value="NM_001084506.1"/>
</dbReference>
<dbReference type="RefSeq" id="NP_001318311.1">
    <molecule id="Q9ZW22-4"/>
    <property type="nucleotide sequence ID" value="NM_001336210.1"/>
</dbReference>
<dbReference type="RefSeq" id="NP_565681.1">
    <molecule id="Q9ZW22-1"/>
    <property type="nucleotide sequence ID" value="NM_128493.4"/>
</dbReference>
<dbReference type="RefSeq" id="NP_850133.1">
    <molecule id="Q9ZW22-2"/>
    <property type="nucleotide sequence ID" value="NM_179802.3"/>
</dbReference>
<dbReference type="RefSeq" id="NP_973559.1">
    <molecule id="Q9ZW22-3"/>
    <property type="nucleotide sequence ID" value="NM_201830.2"/>
</dbReference>
<dbReference type="BioGRID" id="2838">
    <property type="interactions" value="2"/>
</dbReference>
<dbReference type="FunCoup" id="Q9ZW22">
    <property type="interactions" value="2029"/>
</dbReference>
<dbReference type="IntAct" id="Q9ZW22">
    <property type="interactions" value="2"/>
</dbReference>
<dbReference type="STRING" id="3702.Q9ZW22"/>
<dbReference type="PaxDb" id="3702-AT2G29390.1"/>
<dbReference type="ProteomicsDB" id="232541">
    <molecule id="Q9ZW22-1"/>
</dbReference>
<dbReference type="EnsemblPlants" id="AT2G29390.1">
    <molecule id="Q9ZW22-1"/>
    <property type="protein sequence ID" value="AT2G29390.1"/>
    <property type="gene ID" value="AT2G29390"/>
</dbReference>
<dbReference type="EnsemblPlants" id="AT2G29390.2">
    <molecule id="Q9ZW22-2"/>
    <property type="protein sequence ID" value="AT2G29390.2"/>
    <property type="gene ID" value="AT2G29390"/>
</dbReference>
<dbReference type="EnsemblPlants" id="AT2G29390.3">
    <molecule id="Q9ZW22-3"/>
    <property type="protein sequence ID" value="AT2G29390.3"/>
    <property type="gene ID" value="AT2G29390"/>
</dbReference>
<dbReference type="EnsemblPlants" id="AT2G29390.4">
    <molecule id="Q9ZW22-4"/>
    <property type="protein sequence ID" value="AT2G29390.4"/>
    <property type="gene ID" value="AT2G29390"/>
</dbReference>
<dbReference type="EnsemblPlants" id="AT2G29390.5">
    <molecule id="Q9ZW22-5"/>
    <property type="protein sequence ID" value="AT2G29390.5"/>
    <property type="gene ID" value="AT2G29390"/>
</dbReference>
<dbReference type="EnsemblPlants" id="AT2G29390.6">
    <molecule id="Q9ZW22-4"/>
    <property type="protein sequence ID" value="AT2G29390.6"/>
    <property type="gene ID" value="AT2G29390"/>
</dbReference>
<dbReference type="GeneID" id="817488"/>
<dbReference type="Gramene" id="AT2G29390.1">
    <molecule id="Q9ZW22-1"/>
    <property type="protein sequence ID" value="AT2G29390.1"/>
    <property type="gene ID" value="AT2G29390"/>
</dbReference>
<dbReference type="Gramene" id="AT2G29390.2">
    <molecule id="Q9ZW22-2"/>
    <property type="protein sequence ID" value="AT2G29390.2"/>
    <property type="gene ID" value="AT2G29390"/>
</dbReference>
<dbReference type="Gramene" id="AT2G29390.3">
    <molecule id="Q9ZW22-3"/>
    <property type="protein sequence ID" value="AT2G29390.3"/>
    <property type="gene ID" value="AT2G29390"/>
</dbReference>
<dbReference type="Gramene" id="AT2G29390.4">
    <molecule id="Q9ZW22-4"/>
    <property type="protein sequence ID" value="AT2G29390.4"/>
    <property type="gene ID" value="AT2G29390"/>
</dbReference>
<dbReference type="Gramene" id="AT2G29390.5">
    <molecule id="Q9ZW22-5"/>
    <property type="protein sequence ID" value="AT2G29390.5"/>
    <property type="gene ID" value="AT2G29390"/>
</dbReference>
<dbReference type="Gramene" id="AT2G29390.6">
    <molecule id="Q9ZW22-4"/>
    <property type="protein sequence ID" value="AT2G29390.6"/>
    <property type="gene ID" value="AT2G29390"/>
</dbReference>
<dbReference type="KEGG" id="ath:AT2G29390"/>
<dbReference type="Araport" id="AT2G29390"/>
<dbReference type="TAIR" id="AT2G29390">
    <property type="gene designation" value="SMO2-2"/>
</dbReference>
<dbReference type="eggNOG" id="KOG0873">
    <property type="taxonomic scope" value="Eukaryota"/>
</dbReference>
<dbReference type="InParanoid" id="Q9ZW22"/>
<dbReference type="OMA" id="WCAFTGN"/>
<dbReference type="PhylomeDB" id="Q9ZW22"/>
<dbReference type="BioCyc" id="ARA:AT2G29390-MONOMER"/>
<dbReference type="BioCyc" id="MetaCyc:AT2G29390-MONOMER"/>
<dbReference type="BRENDA" id="1.14.18.10">
    <property type="organism ID" value="399"/>
</dbReference>
<dbReference type="BRENDA" id="1.14.18.11">
    <property type="organism ID" value="399"/>
</dbReference>
<dbReference type="PRO" id="PR:Q9ZW22"/>
<dbReference type="Proteomes" id="UP000006548">
    <property type="component" value="Chromosome 2"/>
</dbReference>
<dbReference type="ExpressionAtlas" id="Q9ZW22">
    <property type="expression patterns" value="baseline and differential"/>
</dbReference>
<dbReference type="GO" id="GO:0005789">
    <property type="term" value="C:endoplasmic reticulum membrane"/>
    <property type="evidence" value="ECO:0000314"/>
    <property type="project" value="UniProtKB"/>
</dbReference>
<dbReference type="GO" id="GO:0016020">
    <property type="term" value="C:membrane"/>
    <property type="evidence" value="ECO:0000304"/>
    <property type="project" value="TAIR"/>
</dbReference>
<dbReference type="GO" id="GO:0000254">
    <property type="term" value="F:C-4 methylsterol oxidase activity"/>
    <property type="evidence" value="ECO:0000316"/>
    <property type="project" value="TAIR"/>
</dbReference>
<dbReference type="GO" id="GO:0005506">
    <property type="term" value="F:iron ion binding"/>
    <property type="evidence" value="ECO:0007669"/>
    <property type="project" value="InterPro"/>
</dbReference>
<dbReference type="GO" id="GO:0080065">
    <property type="term" value="P:4-alpha-methyl-delta7-sterol oxidation"/>
    <property type="evidence" value="ECO:0000316"/>
    <property type="project" value="TAIR"/>
</dbReference>
<dbReference type="GO" id="GO:0016126">
    <property type="term" value="P:sterol biosynthetic process"/>
    <property type="evidence" value="ECO:0000316"/>
    <property type="project" value="TAIR"/>
</dbReference>
<dbReference type="InterPro" id="IPR006694">
    <property type="entry name" value="Fatty_acid_hydroxylase"/>
</dbReference>
<dbReference type="InterPro" id="IPR050307">
    <property type="entry name" value="Sterol_Desaturase_Related"/>
</dbReference>
<dbReference type="PANTHER" id="PTHR11863">
    <property type="entry name" value="STEROL DESATURASE"/>
    <property type="match status" value="1"/>
</dbReference>
<dbReference type="Pfam" id="PF04116">
    <property type="entry name" value="FA_hydroxylase"/>
    <property type="match status" value="1"/>
</dbReference>
<evidence type="ECO:0000250" key="1">
    <source>
        <dbReference type="UniProtKB" id="P53045"/>
    </source>
</evidence>
<evidence type="ECO:0000255" key="2"/>
<evidence type="ECO:0000269" key="3">
    <source>
    </source>
</evidence>
<evidence type="ECO:0000269" key="4">
    <source>
    </source>
</evidence>
<evidence type="ECO:0000303" key="5">
    <source>
    </source>
</evidence>
<evidence type="ECO:0000303" key="6">
    <source>
    </source>
</evidence>
<evidence type="ECO:0000303" key="7">
    <source>
    </source>
</evidence>
<evidence type="ECO:0000305" key="8"/>
<evidence type="ECO:0000312" key="9">
    <source>
        <dbReference type="Araport" id="AT2G29390"/>
    </source>
</evidence>
<evidence type="ECO:0000312" key="10">
    <source>
        <dbReference type="EMBL" id="AAC95199.2"/>
    </source>
</evidence>
<organism>
    <name type="scientific">Arabidopsis thaliana</name>
    <name type="common">Mouse-ear cress</name>
    <dbReference type="NCBI Taxonomy" id="3702"/>
    <lineage>
        <taxon>Eukaryota</taxon>
        <taxon>Viridiplantae</taxon>
        <taxon>Streptophyta</taxon>
        <taxon>Embryophyta</taxon>
        <taxon>Tracheophyta</taxon>
        <taxon>Spermatophyta</taxon>
        <taxon>Magnoliopsida</taxon>
        <taxon>eudicotyledons</taxon>
        <taxon>Gunneridae</taxon>
        <taxon>Pentapetalae</taxon>
        <taxon>rosids</taxon>
        <taxon>malvids</taxon>
        <taxon>Brassicales</taxon>
        <taxon>Brassicaceae</taxon>
        <taxon>Camelineae</taxon>
        <taxon>Arabidopsis</taxon>
    </lineage>
</organism>
<protein>
    <recommendedName>
        <fullName evidence="7">Methylsterol monooxygenase 2-1</fullName>
        <ecNumber evidence="3">1.14.18.11</ecNumber>
        <ecNumber evidence="3">1.14.18.9</ecNumber>
    </recommendedName>
    <alternativeName>
        <fullName evidence="5 7">Sterol 4-alpha-methyl-oxidase 2</fullName>
        <shortName evidence="5 7">AtSMO2</shortName>
    </alternativeName>
    <alternativeName>
        <fullName evidence="7">Sterol 4-alpha-methyl-oxidase 2-1</fullName>
    </alternativeName>
</protein>
<sequence>MDSLVESGWKYLVTHFSDFQLACIGSFILHESVFFLSGLPYIFLERTGFLSNYKIQTKSNTPEAQGKCIARLLLYHCCVNLPLMMASYPVFRFMGMESSFPLPSWKVVSAQILFYFIIEDFVFYWGHRILHTKWLYKNVHSVHHEYATPFGLTSEYAHPAEILFLGFATIVGPALTGPHLITLWLWMMLRVIETVEAHCGYHFPWSPSNFLPLYGGSLILMWESFAYSADFHDYHHRLLYTKSGNYSSTFVYMDWIFGTDKGYRKLKALKET</sequence>
<keyword id="KW-0025">Alternative splicing</keyword>
<keyword id="KW-0256">Endoplasmic reticulum</keyword>
<keyword id="KW-0408">Iron</keyword>
<keyword id="KW-0444">Lipid biosynthesis</keyword>
<keyword id="KW-0443">Lipid metabolism</keyword>
<keyword id="KW-0472">Membrane</keyword>
<keyword id="KW-0503">Monooxygenase</keyword>
<keyword id="KW-0560">Oxidoreductase</keyword>
<keyword id="KW-1185">Reference proteome</keyword>
<keyword id="KW-0752">Steroid biosynthesis</keyword>
<keyword id="KW-0753">Steroid metabolism</keyword>
<keyword id="KW-0756">Sterol biosynthesis</keyword>
<keyword id="KW-1207">Sterol metabolism</keyword>
<keyword id="KW-0812">Transmembrane</keyword>
<keyword id="KW-1133">Transmembrane helix</keyword>
<feature type="chain" id="PRO_0000413164" description="Methylsterol monooxygenase 2-1">
    <location>
        <begin position="1"/>
        <end position="272"/>
    </location>
</feature>
<feature type="transmembrane region" description="Helical" evidence="2">
    <location>
        <begin position="24"/>
        <end position="44"/>
    </location>
</feature>
<feature type="transmembrane region" description="Helical" evidence="2">
    <location>
        <begin position="72"/>
        <end position="94"/>
    </location>
</feature>
<feature type="transmembrane region" description="Helical" evidence="2">
    <location>
        <begin position="107"/>
        <end position="127"/>
    </location>
</feature>
<feature type="transmembrane region" description="Helical" evidence="2">
    <location>
        <begin position="162"/>
        <end position="182"/>
    </location>
</feature>
<feature type="transmembrane region" description="Helical" evidence="2">
    <location>
        <begin position="209"/>
        <end position="229"/>
    </location>
</feature>
<feature type="domain" description="Fatty acid hydroxylase" evidence="2">
    <location>
        <begin position="113"/>
        <end position="259"/>
    </location>
</feature>
<feature type="short sequence motif" description="Histidine box-1" evidence="1">
    <location>
        <begin position="127"/>
        <end position="131"/>
    </location>
</feature>
<feature type="short sequence motif" description="Histidine box-2" evidence="1">
    <location>
        <begin position="140"/>
        <end position="144"/>
    </location>
</feature>
<feature type="short sequence motif" description="Histidine box-3" evidence="1">
    <location>
        <begin position="231"/>
        <end position="237"/>
    </location>
</feature>
<feature type="splice variant" id="VSP_041860" description="In isoform 4." evidence="8">
    <location>
        <begin position="1"/>
        <end position="83"/>
    </location>
</feature>
<feature type="splice variant" id="VSP_041861" description="In isoform 5." evidence="8">
    <location>
        <begin position="1"/>
        <end position="41"/>
    </location>
</feature>
<feature type="splice variant" id="VSP_041862" description="In isoform 3." evidence="8">
    <original>MDSLVESGWK</original>
    <variation>MMQ</variation>
    <location>
        <begin position="1"/>
        <end position="10"/>
    </location>
</feature>
<feature type="splice variant" id="VSP_041863" description="In isoform 5." evidence="8">
    <original>IFLERTGFLSNYKIQ</original>
    <variation>MERYHQVVSVLISPM</variation>
    <location>
        <begin position="42"/>
        <end position="56"/>
    </location>
</feature>
<feature type="splice variant" id="VSP_041864" description="In isoform 2, isoform 3, isoform 4 and isoform 5." evidence="5 6 7">
    <location>
        <begin position="217"/>
        <end position="228"/>
    </location>
</feature>